<proteinExistence type="evidence at protein level"/>
<evidence type="ECO:0000250" key="1">
    <source>
        <dbReference type="UniProtKB" id="P62753"/>
    </source>
</evidence>
<evidence type="ECO:0000256" key="2">
    <source>
        <dbReference type="SAM" id="MobiDB-lite"/>
    </source>
</evidence>
<evidence type="ECO:0000269" key="3">
    <source>
    </source>
</evidence>
<evidence type="ECO:0000269" key="4">
    <source>
    </source>
</evidence>
<evidence type="ECO:0000269" key="5">
    <source>
    </source>
</evidence>
<evidence type="ECO:0000305" key="6"/>
<evidence type="ECO:0007744" key="7">
    <source>
        <dbReference type="PDB" id="7CPU"/>
    </source>
</evidence>
<evidence type="ECO:0007744" key="8">
    <source>
        <dbReference type="PDB" id="7CPV"/>
    </source>
</evidence>
<evidence type="ECO:0007744" key="9">
    <source>
    </source>
</evidence>
<evidence type="ECO:0007744" key="10">
    <source>
    </source>
</evidence>
<dbReference type="EMBL" id="Y00348">
    <property type="protein sequence ID" value="CAA68430.1"/>
    <property type="molecule type" value="mRNA"/>
</dbReference>
<dbReference type="EMBL" id="Z54209">
    <property type="protein sequence ID" value="CAA90936.1"/>
    <property type="molecule type" value="Genomic_DNA"/>
</dbReference>
<dbReference type="EMBL" id="AK012284">
    <property type="protein sequence ID" value="BAB28142.1"/>
    <property type="molecule type" value="mRNA"/>
</dbReference>
<dbReference type="EMBL" id="AK012828">
    <property type="protein sequence ID" value="BAB28498.1"/>
    <property type="molecule type" value="mRNA"/>
</dbReference>
<dbReference type="EMBL" id="AK013333">
    <property type="protein sequence ID" value="BAB28796.1"/>
    <property type="molecule type" value="mRNA"/>
</dbReference>
<dbReference type="EMBL" id="AK050609">
    <property type="protein sequence ID" value="BAC34340.1"/>
    <property type="molecule type" value="mRNA"/>
</dbReference>
<dbReference type="EMBL" id="BC010604">
    <property type="protein sequence ID" value="AAH10604.1"/>
    <property type="molecule type" value="mRNA"/>
</dbReference>
<dbReference type="CCDS" id="CCDS18310.1"/>
<dbReference type="PIR" id="S00660">
    <property type="entry name" value="R3MS6"/>
</dbReference>
<dbReference type="RefSeq" id="NP_033122.1">
    <property type="nucleotide sequence ID" value="NM_009096.3"/>
</dbReference>
<dbReference type="RefSeq" id="XP_011238179.1">
    <property type="nucleotide sequence ID" value="XM_011239877.1"/>
</dbReference>
<dbReference type="PDB" id="7CPU">
    <property type="method" value="EM"/>
    <property type="resolution" value="2.82 A"/>
    <property type="chains" value="SG=1-249"/>
</dbReference>
<dbReference type="PDB" id="7CPV">
    <property type="method" value="EM"/>
    <property type="resolution" value="3.03 A"/>
    <property type="chains" value="SG=1-249"/>
</dbReference>
<dbReference type="PDB" id="7LS1">
    <property type="method" value="EM"/>
    <property type="resolution" value="3.30 A"/>
    <property type="chains" value="K3=1-249"/>
</dbReference>
<dbReference type="PDB" id="7LS2">
    <property type="method" value="EM"/>
    <property type="resolution" value="3.10 A"/>
    <property type="chains" value="K3=1-249"/>
</dbReference>
<dbReference type="PDBsum" id="7CPU"/>
<dbReference type="PDBsum" id="7CPV"/>
<dbReference type="PDBsum" id="7LS1"/>
<dbReference type="PDBsum" id="7LS2"/>
<dbReference type="EMDB" id="EMD-23500"/>
<dbReference type="EMDB" id="EMD-23501"/>
<dbReference type="EMDB" id="EMD-30432"/>
<dbReference type="EMDB" id="EMD-30433"/>
<dbReference type="SMR" id="P62754"/>
<dbReference type="BioGRID" id="203013">
    <property type="interactions" value="122"/>
</dbReference>
<dbReference type="ComplexPortal" id="CPX-5261">
    <property type="entry name" value="40S cytosolic small ribosomal subunit"/>
</dbReference>
<dbReference type="CORUM" id="P62754"/>
<dbReference type="DIP" id="DIP-42772N"/>
<dbReference type="FunCoup" id="P62754">
    <property type="interactions" value="3071"/>
</dbReference>
<dbReference type="IntAct" id="P62754">
    <property type="interactions" value="12"/>
</dbReference>
<dbReference type="MINT" id="P62754"/>
<dbReference type="STRING" id="10090.ENSMUSP00000099878"/>
<dbReference type="GlyGen" id="P62754">
    <property type="glycosylation" value="2 sites, 1 N-linked glycan (1 site), 1 O-linked glycan (1 site)"/>
</dbReference>
<dbReference type="iPTMnet" id="P62754"/>
<dbReference type="MetOSite" id="P62754"/>
<dbReference type="PhosphoSitePlus" id="P62754"/>
<dbReference type="SwissPalm" id="P62754"/>
<dbReference type="jPOST" id="P62754"/>
<dbReference type="PaxDb" id="10090-ENSMUSP00000099878"/>
<dbReference type="PeptideAtlas" id="P62754"/>
<dbReference type="ProteomicsDB" id="257041"/>
<dbReference type="Pumba" id="P62754"/>
<dbReference type="Antibodypedia" id="3412">
    <property type="antibodies" value="1314 antibodies from 47 providers"/>
</dbReference>
<dbReference type="DNASU" id="20104"/>
<dbReference type="Ensembl" id="ENSMUST00000102814.5">
    <property type="protein sequence ID" value="ENSMUSP00000099878.5"/>
    <property type="gene ID" value="ENSMUSG00000028495.15"/>
</dbReference>
<dbReference type="GeneID" id="20104"/>
<dbReference type="KEGG" id="mmu:20104"/>
<dbReference type="UCSC" id="uc008tme.1">
    <property type="organism name" value="mouse"/>
</dbReference>
<dbReference type="AGR" id="MGI:98159"/>
<dbReference type="CTD" id="6194"/>
<dbReference type="MGI" id="MGI:98159">
    <property type="gene designation" value="Rps6"/>
</dbReference>
<dbReference type="VEuPathDB" id="HostDB:ENSMUSG00000028495"/>
<dbReference type="eggNOG" id="KOG1646">
    <property type="taxonomic scope" value="Eukaryota"/>
</dbReference>
<dbReference type="GeneTree" id="ENSGT00390000009819"/>
<dbReference type="HOGENOM" id="CLU_046346_0_1_1"/>
<dbReference type="InParanoid" id="P62754"/>
<dbReference type="OMA" id="KPRYKAP"/>
<dbReference type="OrthoDB" id="10260596at2759"/>
<dbReference type="PhylomeDB" id="P62754"/>
<dbReference type="TreeFam" id="TF300035"/>
<dbReference type="Reactome" id="R-MMU-156827">
    <property type="pathway name" value="L13a-mediated translational silencing of Ceruloplasmin expression"/>
</dbReference>
<dbReference type="Reactome" id="R-MMU-166208">
    <property type="pathway name" value="mTORC1-mediated signalling"/>
</dbReference>
<dbReference type="Reactome" id="R-MMU-1799339">
    <property type="pathway name" value="SRP-dependent cotranslational protein targeting to membrane"/>
</dbReference>
<dbReference type="Reactome" id="R-MMU-6791226">
    <property type="pathway name" value="Major pathway of rRNA processing in the nucleolus and cytosol"/>
</dbReference>
<dbReference type="Reactome" id="R-MMU-72649">
    <property type="pathway name" value="Translation initiation complex formation"/>
</dbReference>
<dbReference type="Reactome" id="R-MMU-72689">
    <property type="pathway name" value="Formation of a pool of free 40S subunits"/>
</dbReference>
<dbReference type="Reactome" id="R-MMU-72695">
    <property type="pathway name" value="Formation of the ternary complex, and subsequently, the 43S complex"/>
</dbReference>
<dbReference type="Reactome" id="R-MMU-72702">
    <property type="pathway name" value="Ribosomal scanning and start codon recognition"/>
</dbReference>
<dbReference type="Reactome" id="R-MMU-72706">
    <property type="pathway name" value="GTP hydrolysis and joining of the 60S ribosomal subunit"/>
</dbReference>
<dbReference type="Reactome" id="R-MMU-9629569">
    <property type="pathway name" value="Protein hydroxylation"/>
</dbReference>
<dbReference type="Reactome" id="R-MMU-975956">
    <property type="pathway name" value="Nonsense Mediated Decay (NMD) independent of the Exon Junction Complex (EJC)"/>
</dbReference>
<dbReference type="Reactome" id="R-MMU-975957">
    <property type="pathway name" value="Nonsense Mediated Decay (NMD) enhanced by the Exon Junction Complex (EJC)"/>
</dbReference>
<dbReference type="BioGRID-ORCS" id="20104">
    <property type="hits" value="16 hits in 45 CRISPR screens"/>
</dbReference>
<dbReference type="CD-CODE" id="CE726F99">
    <property type="entry name" value="Postsynaptic density"/>
</dbReference>
<dbReference type="ChiTaRS" id="Rps6">
    <property type="organism name" value="mouse"/>
</dbReference>
<dbReference type="PRO" id="PR:P62754"/>
<dbReference type="Proteomes" id="UP000000589">
    <property type="component" value="Chromosome 4"/>
</dbReference>
<dbReference type="RNAct" id="P62754">
    <property type="molecule type" value="protein"/>
</dbReference>
<dbReference type="Bgee" id="ENSMUSG00000028495">
    <property type="expression patterns" value="Expressed in ectoplacental cone and 66 other cell types or tissues"/>
</dbReference>
<dbReference type="ExpressionAtlas" id="P62754">
    <property type="expression patterns" value="baseline and differential"/>
</dbReference>
<dbReference type="GO" id="GO:0005737">
    <property type="term" value="C:cytoplasm"/>
    <property type="evidence" value="ECO:0000314"/>
    <property type="project" value="MGI"/>
</dbReference>
<dbReference type="GO" id="GO:0005829">
    <property type="term" value="C:cytosol"/>
    <property type="evidence" value="ECO:0000304"/>
    <property type="project" value="Reactome"/>
</dbReference>
<dbReference type="GO" id="GO:0022627">
    <property type="term" value="C:cytosolic small ribosomal subunit"/>
    <property type="evidence" value="ECO:0000314"/>
    <property type="project" value="UniProtKB"/>
</dbReference>
<dbReference type="GO" id="GO:0030425">
    <property type="term" value="C:dendrite"/>
    <property type="evidence" value="ECO:0000314"/>
    <property type="project" value="MGI"/>
</dbReference>
<dbReference type="GO" id="GO:0005730">
    <property type="term" value="C:nucleolus"/>
    <property type="evidence" value="ECO:0007669"/>
    <property type="project" value="UniProtKB-SubCell"/>
</dbReference>
<dbReference type="GO" id="GO:0048471">
    <property type="term" value="C:perinuclear region of cytoplasm"/>
    <property type="evidence" value="ECO:0000314"/>
    <property type="project" value="MGI"/>
</dbReference>
<dbReference type="GO" id="GO:1990904">
    <property type="term" value="C:ribonucleoprotein complex"/>
    <property type="evidence" value="ECO:0000266"/>
    <property type="project" value="MGI"/>
</dbReference>
<dbReference type="GO" id="GO:0005840">
    <property type="term" value="C:ribosome"/>
    <property type="evidence" value="ECO:0000314"/>
    <property type="project" value="MGI"/>
</dbReference>
<dbReference type="GO" id="GO:0032040">
    <property type="term" value="C:small-subunit processome"/>
    <property type="evidence" value="ECO:0000250"/>
    <property type="project" value="UniProtKB"/>
</dbReference>
<dbReference type="GO" id="GO:0003735">
    <property type="term" value="F:structural constituent of ribosome"/>
    <property type="evidence" value="ECO:0000314"/>
    <property type="project" value="UniProtKB"/>
</dbReference>
<dbReference type="GO" id="GO:0006924">
    <property type="term" value="P:activation-induced cell death of T cells"/>
    <property type="evidence" value="ECO:0000315"/>
    <property type="project" value="MGI"/>
</dbReference>
<dbReference type="GO" id="GO:0002181">
    <property type="term" value="P:cytoplasmic translation"/>
    <property type="evidence" value="ECO:0000250"/>
    <property type="project" value="UniProtKB"/>
</dbReference>
<dbReference type="GO" id="GO:0048821">
    <property type="term" value="P:erythrocyte development"/>
    <property type="evidence" value="ECO:0000315"/>
    <property type="project" value="MGI"/>
</dbReference>
<dbReference type="GO" id="GO:0000082">
    <property type="term" value="P:G1/S transition of mitotic cell cycle"/>
    <property type="evidence" value="ECO:0000315"/>
    <property type="project" value="MGI"/>
</dbReference>
<dbReference type="GO" id="GO:0007369">
    <property type="term" value="P:gastrulation"/>
    <property type="evidence" value="ECO:0000315"/>
    <property type="project" value="MGI"/>
</dbReference>
<dbReference type="GO" id="GO:0042593">
    <property type="term" value="P:glucose homeostasis"/>
    <property type="evidence" value="ECO:0000314"/>
    <property type="project" value="UniProtKB"/>
</dbReference>
<dbReference type="GO" id="GO:0022605">
    <property type="term" value="P:mammalian oogenesis stage"/>
    <property type="evidence" value="ECO:0000315"/>
    <property type="project" value="MGI"/>
</dbReference>
<dbReference type="GO" id="GO:0000278">
    <property type="term" value="P:mitotic cell cycle"/>
    <property type="evidence" value="ECO:0000315"/>
    <property type="project" value="MGI"/>
</dbReference>
<dbReference type="GO" id="GO:0043066">
    <property type="term" value="P:negative regulation of apoptotic process"/>
    <property type="evidence" value="ECO:0000315"/>
    <property type="project" value="MGI"/>
</dbReference>
<dbReference type="GO" id="GO:0001890">
    <property type="term" value="P:placenta development"/>
    <property type="evidence" value="ECO:0000315"/>
    <property type="project" value="MGI"/>
</dbReference>
<dbReference type="GO" id="GO:0008284">
    <property type="term" value="P:positive regulation of cell population proliferation"/>
    <property type="evidence" value="ECO:0000250"/>
    <property type="project" value="UniProtKB"/>
</dbReference>
<dbReference type="GO" id="GO:0042274">
    <property type="term" value="P:ribosomal small subunit biogenesis"/>
    <property type="evidence" value="ECO:0000315"/>
    <property type="project" value="MGI"/>
</dbReference>
<dbReference type="GO" id="GO:0006364">
    <property type="term" value="P:rRNA processing"/>
    <property type="evidence" value="ECO:0000315"/>
    <property type="project" value="MGI"/>
</dbReference>
<dbReference type="GO" id="GO:0033077">
    <property type="term" value="P:T cell differentiation in thymus"/>
    <property type="evidence" value="ECO:0000315"/>
    <property type="project" value="MGI"/>
</dbReference>
<dbReference type="GO" id="GO:0002309">
    <property type="term" value="P:T cell proliferation involved in immune response"/>
    <property type="evidence" value="ECO:0000315"/>
    <property type="project" value="MGI"/>
</dbReference>
<dbReference type="FunFam" id="1.20.5.2650:FF:000001">
    <property type="entry name" value="40S ribosomal protein S6"/>
    <property type="match status" value="1"/>
</dbReference>
<dbReference type="Gene3D" id="1.20.5.2650">
    <property type="match status" value="1"/>
</dbReference>
<dbReference type="InterPro" id="IPR001377">
    <property type="entry name" value="Ribosomal_eS6"/>
</dbReference>
<dbReference type="InterPro" id="IPR014401">
    <property type="entry name" value="Ribosomal_eS6-like"/>
</dbReference>
<dbReference type="InterPro" id="IPR018282">
    <property type="entry name" value="Ribosomal_eS6_CS"/>
</dbReference>
<dbReference type="PANTHER" id="PTHR11502">
    <property type="entry name" value="40S RIBOSOMAL PROTEIN S6"/>
    <property type="match status" value="1"/>
</dbReference>
<dbReference type="Pfam" id="PF01092">
    <property type="entry name" value="Ribosomal_S6e"/>
    <property type="match status" value="1"/>
</dbReference>
<dbReference type="PIRSF" id="PIRSF002129">
    <property type="entry name" value="Ribosom_S6_euk"/>
    <property type="match status" value="1"/>
</dbReference>
<dbReference type="SMART" id="SM01405">
    <property type="entry name" value="Ribosomal_S6e"/>
    <property type="match status" value="1"/>
</dbReference>
<dbReference type="PROSITE" id="PS00578">
    <property type="entry name" value="RIBOSOMAL_S6E"/>
    <property type="match status" value="1"/>
</dbReference>
<sequence length="249" mass="28681">MKLNISFPATGCQKLIEVDDERKLRTFYEKRMATEVAADALGEEWKGYVVRISGGNDKQGFPMKQGVLTHGRVRLLLSKGHSCYRPRRTGERKRKSVRGCIVDANLSVLNLVIVKKGEKDIPGLTDTTVPRRLGPKRASRIRKLFNLSKEDDVRQYVVRKPLNKEGKKPRTKAPKIQRLVTPRVLQHKRRRIALKKQRTKKNKEEAAEYAKLLAKRMKEAKEKRQEQIAKRRRLSSLRASTSKSESSQK</sequence>
<feature type="chain" id="PRO_0000137313" description="Small ribosomal subunit protein eS6">
    <location>
        <begin position="1"/>
        <end position="249"/>
    </location>
</feature>
<feature type="region of interest" description="Disordered" evidence="2">
    <location>
        <begin position="217"/>
        <end position="249"/>
    </location>
</feature>
<feature type="compositionally biased region" description="Basic and acidic residues" evidence="2">
    <location>
        <begin position="217"/>
        <end position="229"/>
    </location>
</feature>
<feature type="compositionally biased region" description="Low complexity" evidence="2">
    <location>
        <begin position="236"/>
        <end position="249"/>
    </location>
</feature>
<feature type="modified residue" description="ADP-ribosyl glutamic acid" evidence="1">
    <location>
        <position position="35"/>
    </location>
</feature>
<feature type="modified residue" description="(3R)-3-hydroxyarginine" evidence="1">
    <location>
        <position position="137"/>
    </location>
</feature>
<feature type="modified residue" description="Phosphoserine" evidence="1">
    <location>
        <position position="148"/>
    </location>
</feature>
<feature type="modified residue" description="N6-acetyllysine" evidence="10">
    <location>
        <position position="211"/>
    </location>
</feature>
<feature type="modified residue" description="Phosphoserine; by RPS6KA1, RPS6KA3, DAPK1 and PASK" evidence="1">
    <location>
        <position position="235"/>
    </location>
</feature>
<feature type="modified residue" description="Phosphoserine; by RPS6KA1, RPS6KA3, DAPK1 and PASK" evidence="1">
    <location>
        <position position="236"/>
    </location>
</feature>
<feature type="modified residue" description="Phosphoserine" evidence="3 5">
    <location>
        <position position="240"/>
    </location>
</feature>
<feature type="modified residue" description="Phosphoserine" evidence="1">
    <location>
        <position position="242"/>
    </location>
</feature>
<feature type="modified residue" description="Phosphoserine" evidence="3 5 9">
    <location>
        <position position="244"/>
    </location>
</feature>
<feature type="modified residue" description="Phosphoserine" evidence="5">
    <location>
        <position position="247"/>
    </location>
</feature>
<feature type="cross-link" description="Glycyl lysine isopeptide (Lys-Gly) (interchain with G-Cter in SUMO2)" evidence="1">
    <location>
        <position position="14"/>
    </location>
</feature>
<protein>
    <recommendedName>
        <fullName evidence="6">Small ribosomal subunit protein eS6</fullName>
    </recommendedName>
    <alternativeName>
        <fullName>40S ribosomal protein S6</fullName>
    </alternativeName>
    <alternativeName>
        <fullName>Phosphoprotein NP33</fullName>
    </alternativeName>
</protein>
<reference key="1">
    <citation type="journal article" date="1987" name="Nucleic Acids Res.">
        <title>Complete sequence of mouse S6 ribosomal protein.</title>
        <authorList>
            <person name="Lallanne J.-L."/>
            <person name="Lucero M."/>
            <person name="le Moullec J.-M."/>
        </authorList>
    </citation>
    <scope>NUCLEOTIDE SEQUENCE [MRNA]</scope>
</reference>
<reference key="2">
    <citation type="journal article" date="1996" name="Gene">
        <title>Structural characterization of the mouse ribosomal protein S6-encoding gene.</title>
        <authorList>
            <person name="Pata I."/>
            <person name="Metspalu A."/>
        </authorList>
    </citation>
    <scope>NUCLEOTIDE SEQUENCE [GENOMIC DNA]</scope>
    <source>
        <strain>129/Sv</strain>
        <tissue>Liver</tissue>
    </source>
</reference>
<reference key="3">
    <citation type="journal article" date="2005" name="Science">
        <title>The transcriptional landscape of the mammalian genome.</title>
        <authorList>
            <person name="Carninci P."/>
            <person name="Kasukawa T."/>
            <person name="Katayama S."/>
            <person name="Gough J."/>
            <person name="Frith M.C."/>
            <person name="Maeda N."/>
            <person name="Oyama R."/>
            <person name="Ravasi T."/>
            <person name="Lenhard B."/>
            <person name="Wells C."/>
            <person name="Kodzius R."/>
            <person name="Shimokawa K."/>
            <person name="Bajic V.B."/>
            <person name="Brenner S.E."/>
            <person name="Batalov S."/>
            <person name="Forrest A.R."/>
            <person name="Zavolan M."/>
            <person name="Davis M.J."/>
            <person name="Wilming L.G."/>
            <person name="Aidinis V."/>
            <person name="Allen J.E."/>
            <person name="Ambesi-Impiombato A."/>
            <person name="Apweiler R."/>
            <person name="Aturaliya R.N."/>
            <person name="Bailey T.L."/>
            <person name="Bansal M."/>
            <person name="Baxter L."/>
            <person name="Beisel K.W."/>
            <person name="Bersano T."/>
            <person name="Bono H."/>
            <person name="Chalk A.M."/>
            <person name="Chiu K.P."/>
            <person name="Choudhary V."/>
            <person name="Christoffels A."/>
            <person name="Clutterbuck D.R."/>
            <person name="Crowe M.L."/>
            <person name="Dalla E."/>
            <person name="Dalrymple B.P."/>
            <person name="de Bono B."/>
            <person name="Della Gatta G."/>
            <person name="di Bernardo D."/>
            <person name="Down T."/>
            <person name="Engstrom P."/>
            <person name="Fagiolini M."/>
            <person name="Faulkner G."/>
            <person name="Fletcher C.F."/>
            <person name="Fukushima T."/>
            <person name="Furuno M."/>
            <person name="Futaki S."/>
            <person name="Gariboldi M."/>
            <person name="Georgii-Hemming P."/>
            <person name="Gingeras T.R."/>
            <person name="Gojobori T."/>
            <person name="Green R.E."/>
            <person name="Gustincich S."/>
            <person name="Harbers M."/>
            <person name="Hayashi Y."/>
            <person name="Hensch T.K."/>
            <person name="Hirokawa N."/>
            <person name="Hill D."/>
            <person name="Huminiecki L."/>
            <person name="Iacono M."/>
            <person name="Ikeo K."/>
            <person name="Iwama A."/>
            <person name="Ishikawa T."/>
            <person name="Jakt M."/>
            <person name="Kanapin A."/>
            <person name="Katoh M."/>
            <person name="Kawasawa Y."/>
            <person name="Kelso J."/>
            <person name="Kitamura H."/>
            <person name="Kitano H."/>
            <person name="Kollias G."/>
            <person name="Krishnan S.P."/>
            <person name="Kruger A."/>
            <person name="Kummerfeld S.K."/>
            <person name="Kurochkin I.V."/>
            <person name="Lareau L.F."/>
            <person name="Lazarevic D."/>
            <person name="Lipovich L."/>
            <person name="Liu J."/>
            <person name="Liuni S."/>
            <person name="McWilliam S."/>
            <person name="Madan Babu M."/>
            <person name="Madera M."/>
            <person name="Marchionni L."/>
            <person name="Matsuda H."/>
            <person name="Matsuzawa S."/>
            <person name="Miki H."/>
            <person name="Mignone F."/>
            <person name="Miyake S."/>
            <person name="Morris K."/>
            <person name="Mottagui-Tabar S."/>
            <person name="Mulder N."/>
            <person name="Nakano N."/>
            <person name="Nakauchi H."/>
            <person name="Ng P."/>
            <person name="Nilsson R."/>
            <person name="Nishiguchi S."/>
            <person name="Nishikawa S."/>
            <person name="Nori F."/>
            <person name="Ohara O."/>
            <person name="Okazaki Y."/>
            <person name="Orlando V."/>
            <person name="Pang K.C."/>
            <person name="Pavan W.J."/>
            <person name="Pavesi G."/>
            <person name="Pesole G."/>
            <person name="Petrovsky N."/>
            <person name="Piazza S."/>
            <person name="Reed J."/>
            <person name="Reid J.F."/>
            <person name="Ring B.Z."/>
            <person name="Ringwald M."/>
            <person name="Rost B."/>
            <person name="Ruan Y."/>
            <person name="Salzberg S.L."/>
            <person name="Sandelin A."/>
            <person name="Schneider C."/>
            <person name="Schoenbach C."/>
            <person name="Sekiguchi K."/>
            <person name="Semple C.A."/>
            <person name="Seno S."/>
            <person name="Sessa L."/>
            <person name="Sheng Y."/>
            <person name="Shibata Y."/>
            <person name="Shimada H."/>
            <person name="Shimada K."/>
            <person name="Silva D."/>
            <person name="Sinclair B."/>
            <person name="Sperling S."/>
            <person name="Stupka E."/>
            <person name="Sugiura K."/>
            <person name="Sultana R."/>
            <person name="Takenaka Y."/>
            <person name="Taki K."/>
            <person name="Tammoja K."/>
            <person name="Tan S.L."/>
            <person name="Tang S."/>
            <person name="Taylor M.S."/>
            <person name="Tegner J."/>
            <person name="Teichmann S.A."/>
            <person name="Ueda H.R."/>
            <person name="van Nimwegen E."/>
            <person name="Verardo R."/>
            <person name="Wei C.L."/>
            <person name="Yagi K."/>
            <person name="Yamanishi H."/>
            <person name="Zabarovsky E."/>
            <person name="Zhu S."/>
            <person name="Zimmer A."/>
            <person name="Hide W."/>
            <person name="Bult C."/>
            <person name="Grimmond S.M."/>
            <person name="Teasdale R.D."/>
            <person name="Liu E.T."/>
            <person name="Brusic V."/>
            <person name="Quackenbush J."/>
            <person name="Wahlestedt C."/>
            <person name="Mattick J.S."/>
            <person name="Hume D.A."/>
            <person name="Kai C."/>
            <person name="Sasaki D."/>
            <person name="Tomaru Y."/>
            <person name="Fukuda S."/>
            <person name="Kanamori-Katayama M."/>
            <person name="Suzuki M."/>
            <person name="Aoki J."/>
            <person name="Arakawa T."/>
            <person name="Iida J."/>
            <person name="Imamura K."/>
            <person name="Itoh M."/>
            <person name="Kato T."/>
            <person name="Kawaji H."/>
            <person name="Kawagashira N."/>
            <person name="Kawashima T."/>
            <person name="Kojima M."/>
            <person name="Kondo S."/>
            <person name="Konno H."/>
            <person name="Nakano K."/>
            <person name="Ninomiya N."/>
            <person name="Nishio T."/>
            <person name="Okada M."/>
            <person name="Plessy C."/>
            <person name="Shibata K."/>
            <person name="Shiraki T."/>
            <person name="Suzuki S."/>
            <person name="Tagami M."/>
            <person name="Waki K."/>
            <person name="Watahiki A."/>
            <person name="Okamura-Oho Y."/>
            <person name="Suzuki H."/>
            <person name="Kawai J."/>
            <person name="Hayashizaki Y."/>
        </authorList>
    </citation>
    <scope>NUCLEOTIDE SEQUENCE [LARGE SCALE MRNA]</scope>
    <source>
        <strain>C57BL/6J</strain>
        <tissue>Thymus</tissue>
    </source>
</reference>
<reference key="4">
    <citation type="journal article" date="2004" name="Genome Res.">
        <title>The status, quality, and expansion of the NIH full-length cDNA project: the Mammalian Gene Collection (MGC).</title>
        <authorList>
            <consortium name="The MGC Project Team"/>
        </authorList>
    </citation>
    <scope>NUCLEOTIDE SEQUENCE [LARGE SCALE MRNA]</scope>
    <source>
        <strain>C57BL/6J</strain>
        <tissue>Mammary tumor</tissue>
    </source>
</reference>
<reference key="5">
    <citation type="journal article" date="1991" name="J. Biol. Chem.">
        <title>Mitogen-activated 70K S6 kinase. Identification of in vitro 40 S ribosomal S6 phosphorylation sites.</title>
        <authorList>
            <person name="Ferrari S."/>
            <person name="Bandi H.R."/>
            <person name="Hofsteenge J."/>
            <person name="Bussian B.M."/>
            <person name="Thomas G."/>
        </authorList>
    </citation>
    <scope>PARTIAL PROTEIN SEQUENCE</scope>
    <scope>PHOSPHORYLATION AT SER-235; SER-236; SER-240 AND SER-244</scope>
</reference>
<reference key="6">
    <citation type="journal article" date="1993" name="J. Biol. Chem.">
        <title>Identification of 40 S ribosomal protein S6 phosphorylation sites in Swiss mouse 3T3 fibroblasts stimulated with serum.</title>
        <authorList>
            <person name="Bandi H.R."/>
            <person name="Ferrari S."/>
            <person name="Krieg J."/>
            <person name="Meyer H.E."/>
            <person name="Thomas G."/>
        </authorList>
    </citation>
    <scope>PARTIAL PROTEIN SEQUENCE</scope>
    <scope>PHOSPHORYLATION AT SER-235; SER-240; SER-244 AND SER-247</scope>
</reference>
<reference key="7">
    <citation type="journal article" date="2010" name="Cell">
        <title>A tissue-specific atlas of mouse protein phosphorylation and expression.</title>
        <authorList>
            <person name="Huttlin E.L."/>
            <person name="Jedrychowski M.P."/>
            <person name="Elias J.E."/>
            <person name="Goswami T."/>
            <person name="Rad R."/>
            <person name="Beausoleil S.A."/>
            <person name="Villen J."/>
            <person name="Haas W."/>
            <person name="Sowa M.E."/>
            <person name="Gygi S.P."/>
        </authorList>
    </citation>
    <scope>PHOSPHORYLATION [LARGE SCALE ANALYSIS] AT SER-244</scope>
    <scope>IDENTIFICATION BY MASS SPECTROMETRY [LARGE SCALE ANALYSIS]</scope>
    <source>
        <tissue>Brain</tissue>
        <tissue>Brown adipose tissue</tissue>
        <tissue>Heart</tissue>
        <tissue>Kidney</tissue>
        <tissue>Liver</tissue>
        <tissue>Lung</tissue>
        <tissue>Pancreas</tissue>
        <tissue>Spleen</tissue>
        <tissue>Testis</tissue>
    </source>
</reference>
<reference key="8">
    <citation type="journal article" date="2013" name="Mol. Cell">
        <title>SIRT5-mediated lysine desuccinylation impacts diverse metabolic pathways.</title>
        <authorList>
            <person name="Park J."/>
            <person name="Chen Y."/>
            <person name="Tishkoff D.X."/>
            <person name="Peng C."/>
            <person name="Tan M."/>
            <person name="Dai L."/>
            <person name="Xie Z."/>
            <person name="Zhang Y."/>
            <person name="Zwaans B.M."/>
            <person name="Skinner M.E."/>
            <person name="Lombard D.B."/>
            <person name="Zhao Y."/>
        </authorList>
    </citation>
    <scope>ACETYLATION [LARGE SCALE ANALYSIS] AT LYS-211</scope>
    <scope>IDENTIFICATION BY MASS SPECTROMETRY [LARGE SCALE ANALYSIS]</scope>
    <source>
        <tissue>Embryonic fibroblast</tissue>
    </source>
</reference>
<reference evidence="7 8" key="9">
    <citation type="journal article" date="2022" name="Nature">
        <title>A male germ-cell-specific ribosome controls male fertility.</title>
        <authorList>
            <person name="Li H."/>
            <person name="Huo Y."/>
            <person name="He X."/>
            <person name="Yao L."/>
            <person name="Zhang H."/>
            <person name="Cui Y."/>
            <person name="Xiao H."/>
            <person name="Xie W."/>
            <person name="Zhang D."/>
            <person name="Wang Y."/>
            <person name="Zhang S."/>
            <person name="Tu H."/>
            <person name="Cheng Y."/>
            <person name="Guo Y."/>
            <person name="Cao X."/>
            <person name="Zhu Y."/>
            <person name="Jiang T."/>
            <person name="Guo X."/>
            <person name="Qin Y."/>
            <person name="Sha J."/>
        </authorList>
    </citation>
    <scope>STRUCTURE BY ELECTRON MICROSCOPY (3.03 ANGSTROMS) OF RIBOSOME</scope>
    <scope>FUNCTION</scope>
    <scope>SUBUNIT</scope>
    <scope>SUBCELLULAR LOCATION</scope>
</reference>
<keyword id="KW-0002">3D-structure</keyword>
<keyword id="KW-0007">Acetylation</keyword>
<keyword id="KW-0013">ADP-ribosylation</keyword>
<keyword id="KW-0963">Cytoplasm</keyword>
<keyword id="KW-0903">Direct protein sequencing</keyword>
<keyword id="KW-0379">Hydroxylation</keyword>
<keyword id="KW-1017">Isopeptide bond</keyword>
<keyword id="KW-0539">Nucleus</keyword>
<keyword id="KW-0597">Phosphoprotein</keyword>
<keyword id="KW-1185">Reference proteome</keyword>
<keyword id="KW-0687">Ribonucleoprotein</keyword>
<keyword id="KW-0689">Ribosomal protein</keyword>
<keyword id="KW-0832">Ubl conjugation</keyword>
<name>RS6_MOUSE</name>
<comment type="function">
    <text evidence="1 4">Component of the 40S small ribosomal subunit. Plays an important role in controlling cell growth and proliferation through the selective translation of particular classes of mRNA (PubMed:36517592). Part of the small subunit (SSU) processome, first precursor of the small eukaryotic ribosomal subunit. During the assembly of the SSU processome in the nucleolus, many ribosome biogenesis factors, an RNA chaperone and ribosomal proteins associate with the nascent pre-rRNA and work in concert to generate RNA folding, modifications, rearrangements and cleavage as well as targeted degradation of pre-ribosomal RNA by the RNA exosome (By similarity).</text>
</comment>
<comment type="subunit">
    <text evidence="1 4">Component of the small ribosomal subunit (PubMed:36517592). Part of the small subunit (SSU) processome, composed of more than 70 proteins and the RNA chaperone small nucleolar RNA (snoRNA) U3 (By similarity).</text>
</comment>
<comment type="subcellular location">
    <subcellularLocation>
        <location evidence="4">Cytoplasm</location>
    </subcellularLocation>
    <subcellularLocation>
        <location evidence="1">Nucleus</location>
        <location evidence="1">Nucleolus</location>
    </subcellularLocation>
</comment>
<comment type="PTM">
    <text evidence="3 5">Ribosomal protein S6 is the major substrate of protein kinases in eukaryote ribosomes. The phosphorylation is stimulated by growth factors, tumor promoting agents, and mitogens. It is dephosphorylated at growth arrest. Phosphorylated at Ser-235 and Ser-236 by RPS6KA1 and RPS6KA3; phosphorylation at these sites facilitates the assembly of the pre-initiation complex.</text>
</comment>
<comment type="PTM">
    <text evidence="1">Specifically hydroxylated (with R stereochemistry) at C-3 of Arg-137 by KDM8.</text>
</comment>
<comment type="PTM">
    <text evidence="1">Mono-ADP-ribosylation at Glu-35 by PARP16 inhibits polysome assembly and mRNA loading, thereby inhibiting protein translation.</text>
</comment>
<comment type="similarity">
    <text evidence="6">Belongs to the eukaryotic ribosomal protein eS6 family.</text>
</comment>
<accession>P62754</accession>
<accession>P08227</accession>
<accession>P10660</accession>
<gene>
    <name type="primary">Rps6</name>
</gene>
<organism>
    <name type="scientific">Mus musculus</name>
    <name type="common">Mouse</name>
    <dbReference type="NCBI Taxonomy" id="10090"/>
    <lineage>
        <taxon>Eukaryota</taxon>
        <taxon>Metazoa</taxon>
        <taxon>Chordata</taxon>
        <taxon>Craniata</taxon>
        <taxon>Vertebrata</taxon>
        <taxon>Euteleostomi</taxon>
        <taxon>Mammalia</taxon>
        <taxon>Eutheria</taxon>
        <taxon>Euarchontoglires</taxon>
        <taxon>Glires</taxon>
        <taxon>Rodentia</taxon>
        <taxon>Myomorpha</taxon>
        <taxon>Muroidea</taxon>
        <taxon>Muridae</taxon>
        <taxon>Murinae</taxon>
        <taxon>Mus</taxon>
        <taxon>Mus</taxon>
    </lineage>
</organism>